<organism>
    <name type="scientific">Californiconus californicus</name>
    <name type="common">California cone</name>
    <name type="synonym">Conus californicus</name>
    <dbReference type="NCBI Taxonomy" id="1736779"/>
    <lineage>
        <taxon>Eukaryota</taxon>
        <taxon>Metazoa</taxon>
        <taxon>Spiralia</taxon>
        <taxon>Lophotrochozoa</taxon>
        <taxon>Mollusca</taxon>
        <taxon>Gastropoda</taxon>
        <taxon>Caenogastropoda</taxon>
        <taxon>Neogastropoda</taxon>
        <taxon>Conoidea</taxon>
        <taxon>Conidae</taxon>
        <taxon>Californiconus</taxon>
    </lineage>
</organism>
<proteinExistence type="inferred from homology"/>
<name>O1C5_CONCL</name>
<evidence type="ECO:0000255" key="1"/>
<evidence type="ECO:0000303" key="2">
    <source>
    </source>
</evidence>
<evidence type="ECO:0000305" key="3"/>
<evidence type="ECO:0000305" key="4">
    <source>
    </source>
</evidence>
<reference key="1">
    <citation type="journal article" date="2019" name="Toxins">
        <title>The diversified O-superfamily in Californiconus californicus presents a conotoxin with antimycobacterial activity.</title>
        <authorList>
            <person name="Bernaldez-Sarabia J."/>
            <person name="Figueroa-Montiel A."/>
            <person name="Duenas S."/>
            <person name="Cervantes-Luevano K."/>
            <person name="Beltran J.A."/>
            <person name="Ortiz E."/>
            <person name="Jimenez S."/>
            <person name="Possani L.D."/>
            <person name="Paniagua-Solis J.F."/>
            <person name="Gonzalez-Canudas J."/>
            <person name="Licea-Navarro A."/>
        </authorList>
    </citation>
    <scope>NUCLEOTIDE SEQUENCE [MRNA]</scope>
    <source>
        <tissue>Venom duct</tissue>
    </source>
</reference>
<comment type="function">
    <text evidence="3">Probable neurotoxin.</text>
</comment>
<comment type="subcellular location">
    <subcellularLocation>
        <location evidence="4">Secreted</location>
    </subcellularLocation>
</comment>
<comment type="tissue specificity">
    <text evidence="4">Expressed by the venom duct.</text>
</comment>
<comment type="domain">
    <text evidence="3">The cysteine framework is XII (C-C-C-C-CC-C-C).</text>
</comment>
<comment type="PTM">
    <text evidence="4">Contains 4 disulfide bonds.</text>
</comment>
<comment type="similarity">
    <text evidence="3">Belongs to the conotoxin O1 superfamily.</text>
</comment>
<sequence>MKVTCVLVVLLLLLPYGDLLGNSVCDFGSCVHNGCYCEEHRPCCTPGSCSSWWPRCPGSMMDP</sequence>
<keyword id="KW-1015">Disulfide bond</keyword>
<keyword id="KW-0528">Neurotoxin</keyword>
<keyword id="KW-0964">Secreted</keyword>
<keyword id="KW-0732">Signal</keyword>
<keyword id="KW-0800">Toxin</keyword>
<feature type="signal peptide" evidence="1">
    <location>
        <begin position="1"/>
        <end position="21"/>
    </location>
</feature>
<feature type="chain" id="PRO_0000450956" description="Conotoxin Cal12.5" evidence="3">
    <location>
        <begin position="22"/>
        <end position="63"/>
    </location>
</feature>
<accession>P0DTX4</accession>
<protein>
    <recommendedName>
        <fullName evidence="3">Conotoxin Cal12.5</fullName>
    </recommendedName>
    <alternativeName>
        <fullName evidence="2">O1_cal12c</fullName>
    </alternativeName>
</protein>
<dbReference type="GO" id="GO:0005576">
    <property type="term" value="C:extracellular region"/>
    <property type="evidence" value="ECO:0007669"/>
    <property type="project" value="UniProtKB-SubCell"/>
</dbReference>
<dbReference type="GO" id="GO:0090729">
    <property type="term" value="F:toxin activity"/>
    <property type="evidence" value="ECO:0007669"/>
    <property type="project" value="UniProtKB-KW"/>
</dbReference>